<name>RL7_ANADF</name>
<proteinExistence type="inferred from homology"/>
<keyword id="KW-1185">Reference proteome</keyword>
<keyword id="KW-0687">Ribonucleoprotein</keyword>
<keyword id="KW-0689">Ribosomal protein</keyword>
<evidence type="ECO:0000255" key="1">
    <source>
        <dbReference type="HAMAP-Rule" id="MF_00368"/>
    </source>
</evidence>
<evidence type="ECO:0000305" key="2"/>
<accession>A7HCH8</accession>
<reference key="1">
    <citation type="journal article" date="2015" name="Genome Announc.">
        <title>Complete genome sequence of Anaeromyxobacter sp. Fw109-5, an anaerobic, metal-reducing bacterium isolated from a contaminated subsurface environment.</title>
        <authorList>
            <person name="Hwang C."/>
            <person name="Copeland A."/>
            <person name="Lucas S."/>
            <person name="Lapidus A."/>
            <person name="Barry K."/>
            <person name="Glavina Del Rio T."/>
            <person name="Dalin E."/>
            <person name="Tice H."/>
            <person name="Pitluck S."/>
            <person name="Sims D."/>
            <person name="Brettin T."/>
            <person name="Bruce D.C."/>
            <person name="Detter J.C."/>
            <person name="Han C.S."/>
            <person name="Schmutz J."/>
            <person name="Larimer F.W."/>
            <person name="Land M.L."/>
            <person name="Hauser L.J."/>
            <person name="Kyrpides N."/>
            <person name="Lykidis A."/>
            <person name="Richardson P."/>
            <person name="Belieav A."/>
            <person name="Sanford R.A."/>
            <person name="Loeffler F.E."/>
            <person name="Fields M.W."/>
        </authorList>
    </citation>
    <scope>NUCLEOTIDE SEQUENCE [LARGE SCALE GENOMIC DNA]</scope>
    <source>
        <strain>Fw109-5</strain>
    </source>
</reference>
<dbReference type="EMBL" id="CP000769">
    <property type="protein sequence ID" value="ABS26424.1"/>
    <property type="molecule type" value="Genomic_DNA"/>
</dbReference>
<dbReference type="RefSeq" id="WP_012097006.1">
    <property type="nucleotide sequence ID" value="NC_009675.1"/>
</dbReference>
<dbReference type="SMR" id="A7HCH8"/>
<dbReference type="STRING" id="404589.Anae109_2222"/>
<dbReference type="KEGG" id="afw:Anae109_2222"/>
<dbReference type="eggNOG" id="COG0222">
    <property type="taxonomic scope" value="Bacteria"/>
</dbReference>
<dbReference type="HOGENOM" id="CLU_086499_3_0_7"/>
<dbReference type="OrthoDB" id="9811748at2"/>
<dbReference type="Proteomes" id="UP000006382">
    <property type="component" value="Chromosome"/>
</dbReference>
<dbReference type="GO" id="GO:0022625">
    <property type="term" value="C:cytosolic large ribosomal subunit"/>
    <property type="evidence" value="ECO:0007669"/>
    <property type="project" value="TreeGrafter"/>
</dbReference>
<dbReference type="GO" id="GO:0003729">
    <property type="term" value="F:mRNA binding"/>
    <property type="evidence" value="ECO:0007669"/>
    <property type="project" value="TreeGrafter"/>
</dbReference>
<dbReference type="GO" id="GO:0003735">
    <property type="term" value="F:structural constituent of ribosome"/>
    <property type="evidence" value="ECO:0007669"/>
    <property type="project" value="InterPro"/>
</dbReference>
<dbReference type="GO" id="GO:0006412">
    <property type="term" value="P:translation"/>
    <property type="evidence" value="ECO:0007669"/>
    <property type="project" value="UniProtKB-UniRule"/>
</dbReference>
<dbReference type="CDD" id="cd00387">
    <property type="entry name" value="Ribosomal_L7_L12"/>
    <property type="match status" value="1"/>
</dbReference>
<dbReference type="FunFam" id="1.20.5.710:FF:000007">
    <property type="entry name" value="50S ribosomal protein L7/L12"/>
    <property type="match status" value="1"/>
</dbReference>
<dbReference type="FunFam" id="3.30.1390.10:FF:000001">
    <property type="entry name" value="50S ribosomal protein L7/L12"/>
    <property type="match status" value="1"/>
</dbReference>
<dbReference type="Gene3D" id="3.30.1390.10">
    <property type="match status" value="1"/>
</dbReference>
<dbReference type="Gene3D" id="1.20.5.710">
    <property type="entry name" value="Single helix bin"/>
    <property type="match status" value="1"/>
</dbReference>
<dbReference type="HAMAP" id="MF_00368">
    <property type="entry name" value="Ribosomal_bL12"/>
    <property type="match status" value="1"/>
</dbReference>
<dbReference type="InterPro" id="IPR000206">
    <property type="entry name" value="Ribosomal_bL12"/>
</dbReference>
<dbReference type="InterPro" id="IPR013823">
    <property type="entry name" value="Ribosomal_bL12_C"/>
</dbReference>
<dbReference type="InterPro" id="IPR014719">
    <property type="entry name" value="Ribosomal_bL12_C/ClpS-like"/>
</dbReference>
<dbReference type="InterPro" id="IPR008932">
    <property type="entry name" value="Ribosomal_bL12_oligo"/>
</dbReference>
<dbReference type="InterPro" id="IPR036235">
    <property type="entry name" value="Ribosomal_bL12_oligo_N_sf"/>
</dbReference>
<dbReference type="NCBIfam" id="TIGR00855">
    <property type="entry name" value="L12"/>
    <property type="match status" value="1"/>
</dbReference>
<dbReference type="PANTHER" id="PTHR45987">
    <property type="entry name" value="39S RIBOSOMAL PROTEIN L12"/>
    <property type="match status" value="1"/>
</dbReference>
<dbReference type="PANTHER" id="PTHR45987:SF4">
    <property type="entry name" value="LARGE RIBOSOMAL SUBUNIT PROTEIN BL12M"/>
    <property type="match status" value="1"/>
</dbReference>
<dbReference type="Pfam" id="PF00542">
    <property type="entry name" value="Ribosomal_L12"/>
    <property type="match status" value="1"/>
</dbReference>
<dbReference type="Pfam" id="PF16320">
    <property type="entry name" value="Ribosomal_L12_N"/>
    <property type="match status" value="1"/>
</dbReference>
<dbReference type="SUPFAM" id="SSF54736">
    <property type="entry name" value="ClpS-like"/>
    <property type="match status" value="1"/>
</dbReference>
<dbReference type="SUPFAM" id="SSF48300">
    <property type="entry name" value="Ribosomal protein L7/12, oligomerisation (N-terminal) domain"/>
    <property type="match status" value="1"/>
</dbReference>
<sequence>MADLNTIVDQLSGLTVMEAADLVKKLEEKWGVSAAAPVMVAGGAGGAAAAAPVEEKTEFNVVLADAGANKINVIKEVRAITGLGLKEAKDLVEGAPKEVKVGIPKAEADELKKKLEAAGAKVEIK</sequence>
<gene>
    <name evidence="1" type="primary">rplL</name>
    <name type="ordered locus">Anae109_2222</name>
</gene>
<feature type="chain" id="PRO_1000006956" description="Large ribosomal subunit protein bL12">
    <location>
        <begin position="1"/>
        <end position="125"/>
    </location>
</feature>
<protein>
    <recommendedName>
        <fullName evidence="1">Large ribosomal subunit protein bL12</fullName>
    </recommendedName>
    <alternativeName>
        <fullName evidence="2">50S ribosomal protein L7/L12</fullName>
    </alternativeName>
</protein>
<comment type="function">
    <text evidence="1">Forms part of the ribosomal stalk which helps the ribosome interact with GTP-bound translation factors. Is thus essential for accurate translation.</text>
</comment>
<comment type="subunit">
    <text evidence="1">Homodimer. Part of the ribosomal stalk of the 50S ribosomal subunit. Forms a multimeric L10(L12)X complex, where L10 forms an elongated spine to which 2 to 4 L12 dimers bind in a sequential fashion. Binds GTP-bound translation factors.</text>
</comment>
<comment type="similarity">
    <text evidence="1">Belongs to the bacterial ribosomal protein bL12 family.</text>
</comment>
<organism>
    <name type="scientific">Anaeromyxobacter sp. (strain Fw109-5)</name>
    <dbReference type="NCBI Taxonomy" id="404589"/>
    <lineage>
        <taxon>Bacteria</taxon>
        <taxon>Pseudomonadati</taxon>
        <taxon>Myxococcota</taxon>
        <taxon>Myxococcia</taxon>
        <taxon>Myxococcales</taxon>
        <taxon>Cystobacterineae</taxon>
        <taxon>Anaeromyxobacteraceae</taxon>
        <taxon>Anaeromyxobacter</taxon>
    </lineage>
</organism>